<gene>
    <name type="ordered locus">At1g53240</name>
    <name type="ORF">F12M16.14</name>
</gene>
<name>MDHM1_ARATH</name>
<evidence type="ECO:0000250" key="1"/>
<evidence type="ECO:0000250" key="2">
    <source>
        <dbReference type="UniProtKB" id="P11708"/>
    </source>
</evidence>
<evidence type="ECO:0000250" key="3">
    <source>
        <dbReference type="UniProtKB" id="P40926"/>
    </source>
</evidence>
<evidence type="ECO:0000269" key="4">
    <source>
    </source>
</evidence>
<evidence type="ECO:0000269" key="5">
    <source>
    </source>
</evidence>
<evidence type="ECO:0000269" key="6">
    <source>
    </source>
</evidence>
<evidence type="ECO:0000269" key="7">
    <source>
    </source>
</evidence>
<evidence type="ECO:0000269" key="8">
    <source>
    </source>
</evidence>
<evidence type="ECO:0000269" key="9">
    <source>
    </source>
</evidence>
<evidence type="ECO:0000269" key="10">
    <source>
    </source>
</evidence>
<evidence type="ECO:0000269" key="11">
    <source>
    </source>
</evidence>
<evidence type="ECO:0000303" key="12">
    <source>
    </source>
</evidence>
<evidence type="ECO:0000305" key="13"/>
<evidence type="ECO:0000305" key="14">
    <source>
    </source>
</evidence>
<evidence type="ECO:0000305" key="15">
    <source>
    </source>
</evidence>
<comment type="function">
    <text evidence="6 8 9 11 14">Catalyzes a reversible NAD-dependent dehydrogenase reaction involved in central metabolism and redox homeostasis between organelle compartments (Probable). Required for carbon dioxide and energy partitioning in leaves. May limit photorespiration during the dark phase (PubMed:20876337, PubMed:27208265). Its activity is essential to shuttle reductants out from the mitochondria to support the photorespiratory flux (PubMed:26889011). Can convert 2-oxoglutarate to (S)-2-hydroxyglutarate in vitro (PubMed:26203119).</text>
</comment>
<comment type="catalytic activity">
    <reaction evidence="8">
        <text>(S)-malate + NAD(+) = oxaloacetate + NADH + H(+)</text>
        <dbReference type="Rhea" id="RHEA:21432"/>
        <dbReference type="ChEBI" id="CHEBI:15378"/>
        <dbReference type="ChEBI" id="CHEBI:15589"/>
        <dbReference type="ChEBI" id="CHEBI:16452"/>
        <dbReference type="ChEBI" id="CHEBI:57540"/>
        <dbReference type="ChEBI" id="CHEBI:57945"/>
        <dbReference type="EC" id="1.1.1.37"/>
    </reaction>
</comment>
<comment type="activity regulation">
    <text evidence="10">Negatively regulated by ATP. Not redox-regulated. The formation of intramolecular disulfide bonds does not alter enzymatic activity.</text>
</comment>
<comment type="biophysicochemical properties">
    <kinetics>
        <KM evidence="10">0.8 mM for malate (at pH 7.5)</KM>
        <KM evidence="10">0.11 mM for oxaloacetate (at pH 7.5)</KM>
        <KM evidence="8">0.27 mM for oxaloacetate (at pH 7.4)</KM>
        <KM evidence="10">0.6 mM for NAD(+) (at pH 7.5)</KM>
        <KM evidence="10">0.23 mM for NADH (at pH 7.5)</KM>
        <KM evidence="8">41 mM for 2-ketoglutarate (at pH 7.4)</KM>
        <Vmax evidence="10">0.087 mmol/min/mg enzyme toward malate (at pH 7.5)</Vmax>
        <Vmax evidence="8">0.03 mmol/min/mg enzyme toward malate (at pH 7.4)</Vmax>
        <Vmax evidence="10">1.2 mmol/min/mg enzyme toward oxaloacetate (at pH 7.5)</Vmax>
        <Vmax evidence="8">2.39 mmol/min/mg enzyme toward oxaloacetate (at pH 7.4)</Vmax>
        <Vmax evidence="10">79.0 umol/min/mg enzyme toward NAD(+) (at pH 7.5)</Vmax>
        <Vmax evidence="10">2732.0 umol/min/mg enzyme toward NADH (at pH 7.5)</Vmax>
        <Vmax evidence="8">0.38 mmol/min/mg enzyme toward 2-ketoglutarate (at pH 7.4)</Vmax>
    </kinetics>
</comment>
<comment type="subunit">
    <text evidence="1">Homodimer.</text>
</comment>
<comment type="subcellular location">
    <subcellularLocation>
        <location evidence="4 5 15">Mitochondrion matrix</location>
    </subcellularLocation>
</comment>
<comment type="tissue specificity">
    <text evidence="6">Expressed in rosette leaves.</text>
</comment>
<comment type="PTM">
    <text evidence="10">Forms intramolecular disulfide bonds.</text>
</comment>
<comment type="disruption phenotype">
    <text evidence="6 9">Slight reduction of rosette leaf size and reduction by 50 percents in fresh weight and seed production (PubMed:26889011). The double mutant plants mmdh1 and mmdh2 have decreased germination rate, grow slowly, are small, have increased photorespiration and die before producing seeds (PubMed:20876337).</text>
</comment>
<comment type="similarity">
    <text evidence="13">Belongs to the LDH/MDH superfamily. MDH type 1 family.</text>
</comment>
<comment type="sequence caution" evidence="13">
    <conflict type="erroneous gene model prediction">
        <sequence resource="EMBL-CDS" id="AAF69549"/>
    </conflict>
</comment>
<feature type="transit peptide" description="Mitochondrion" evidence="4 7">
    <location>
        <begin position="1"/>
        <end position="22"/>
    </location>
</feature>
<feature type="chain" id="PRO_0000018622" description="Malate dehydrogenase 1, mitochondrial">
    <location>
        <begin position="23"/>
        <end position="341"/>
    </location>
</feature>
<feature type="active site" description="Proton acceptor" evidence="2">
    <location>
        <position position="205"/>
    </location>
</feature>
<feature type="binding site" evidence="3">
    <location>
        <begin position="36"/>
        <end position="42"/>
    </location>
    <ligand>
        <name>NAD(+)</name>
        <dbReference type="ChEBI" id="CHEBI:57540"/>
    </ligand>
</feature>
<feature type="binding site" evidence="3">
    <location>
        <position position="62"/>
    </location>
    <ligand>
        <name>NAD(+)</name>
        <dbReference type="ChEBI" id="CHEBI:57540"/>
    </ligand>
</feature>
<feature type="binding site" evidence="2">
    <location>
        <position position="109"/>
    </location>
    <ligand>
        <name>substrate</name>
    </ligand>
</feature>
<feature type="binding site" evidence="2">
    <location>
        <position position="115"/>
    </location>
    <ligand>
        <name>substrate</name>
    </ligand>
</feature>
<feature type="binding site" evidence="3">
    <location>
        <position position="122"/>
    </location>
    <ligand>
        <name>NAD(+)</name>
        <dbReference type="ChEBI" id="CHEBI:57540"/>
    </ligand>
</feature>
<feature type="binding site" evidence="3">
    <location>
        <begin position="145"/>
        <end position="147"/>
    </location>
    <ligand>
        <name>NAD(+)</name>
        <dbReference type="ChEBI" id="CHEBI:57540"/>
    </ligand>
</feature>
<feature type="binding site" evidence="2">
    <location>
        <position position="147"/>
    </location>
    <ligand>
        <name>substrate</name>
    </ligand>
</feature>
<feature type="binding site" evidence="2">
    <location>
        <position position="181"/>
    </location>
    <ligand>
        <name>substrate</name>
    </ligand>
</feature>
<feature type="binding site" evidence="3">
    <location>
        <position position="256"/>
    </location>
    <ligand>
        <name>NAD(+)</name>
        <dbReference type="ChEBI" id="CHEBI:57540"/>
    </ligand>
</feature>
<feature type="sequence conflict" description="In Ref. 5; AAM64855." evidence="13" ref="5">
    <original>V</original>
    <variation>A</variation>
    <location>
        <position position="17"/>
    </location>
</feature>
<accession>Q9ZP06</accession>
<accession>Q8LBB9</accession>
<accession>Q9MAH7</accession>
<protein>
    <recommendedName>
        <fullName evidence="13">Malate dehydrogenase 1, mitochondrial</fullName>
        <ecNumber evidence="8">1.1.1.37</ecNumber>
    </recommendedName>
    <alternativeName>
        <fullName evidence="12">Mitochondrial MDH1</fullName>
        <shortName evidence="12">mMDH1</shortName>
    </alternativeName>
    <alternativeName>
        <fullName evidence="13">Mitochondrial NAD-dependent malate dehydrogenase 1</fullName>
        <shortName evidence="13">mNAD-MDH 1</shortName>
        <shortName evidence="12">mtNAD-MDH1</shortName>
    </alternativeName>
</protein>
<keyword id="KW-0903">Direct protein sequencing</keyword>
<keyword id="KW-1015">Disulfide bond</keyword>
<keyword id="KW-0496">Mitochondrion</keyword>
<keyword id="KW-0520">NAD</keyword>
<keyword id="KW-0560">Oxidoreductase</keyword>
<keyword id="KW-1185">Reference proteome</keyword>
<keyword id="KW-0809">Transit peptide</keyword>
<keyword id="KW-0816">Tricarboxylic acid cycle</keyword>
<dbReference type="EC" id="1.1.1.37" evidence="8"/>
<dbReference type="EMBL" id="AJ131205">
    <property type="protein sequence ID" value="CAA10320.1"/>
    <property type="molecule type" value="mRNA"/>
</dbReference>
<dbReference type="EMBL" id="AC008007">
    <property type="protein sequence ID" value="AAF69549.1"/>
    <property type="status" value="ALT_SEQ"/>
    <property type="molecule type" value="Genomic_DNA"/>
</dbReference>
<dbReference type="EMBL" id="CP002684">
    <property type="protein sequence ID" value="AEE32910.1"/>
    <property type="molecule type" value="Genomic_DNA"/>
</dbReference>
<dbReference type="EMBL" id="AF324670">
    <property type="protein sequence ID" value="AAG40021.1"/>
    <property type="molecule type" value="mRNA"/>
</dbReference>
<dbReference type="EMBL" id="AF339684">
    <property type="protein sequence ID" value="AAK00366.1"/>
    <property type="molecule type" value="mRNA"/>
</dbReference>
<dbReference type="EMBL" id="AY062580">
    <property type="protein sequence ID" value="AAL32658.1"/>
    <property type="molecule type" value="mRNA"/>
</dbReference>
<dbReference type="EMBL" id="AY128783">
    <property type="protein sequence ID" value="AAM91183.1"/>
    <property type="molecule type" value="mRNA"/>
</dbReference>
<dbReference type="EMBL" id="AY087304">
    <property type="protein sequence ID" value="AAM64855.1"/>
    <property type="molecule type" value="mRNA"/>
</dbReference>
<dbReference type="PIR" id="T51311">
    <property type="entry name" value="T51311"/>
</dbReference>
<dbReference type="SMR" id="Q9ZP06"/>
<dbReference type="BioGRID" id="26982">
    <property type="interactions" value="25"/>
</dbReference>
<dbReference type="FunCoup" id="Q9ZP06">
    <property type="interactions" value="3123"/>
</dbReference>
<dbReference type="IntAct" id="Q9ZP06">
    <property type="interactions" value="1"/>
</dbReference>
<dbReference type="STRING" id="3702.Q9ZP06"/>
<dbReference type="iPTMnet" id="Q9ZP06"/>
<dbReference type="MetOSite" id="Q9ZP06"/>
<dbReference type="PaxDb" id="3702-AT1G53240.1"/>
<dbReference type="ProteomicsDB" id="238769"/>
<dbReference type="EnsemblPlants" id="AT1G53240.1">
    <property type="protein sequence ID" value="AT1G53240.1"/>
    <property type="gene ID" value="AT1G53240"/>
</dbReference>
<dbReference type="Gramene" id="AT1G53240.1">
    <property type="protein sequence ID" value="AT1G53240.1"/>
    <property type="gene ID" value="AT1G53240"/>
</dbReference>
<dbReference type="KEGG" id="ath:AT1G53240"/>
<dbReference type="Araport" id="AT1G53240"/>
<dbReference type="TAIR" id="AT1G53240">
    <property type="gene designation" value="MMDH1"/>
</dbReference>
<dbReference type="eggNOG" id="KOG1494">
    <property type="taxonomic scope" value="Eukaryota"/>
</dbReference>
<dbReference type="HOGENOM" id="CLU_047181_0_1_1"/>
<dbReference type="InParanoid" id="Q9ZP06"/>
<dbReference type="OMA" id="HINTPSI"/>
<dbReference type="PhylomeDB" id="Q9ZP06"/>
<dbReference type="BioCyc" id="ARA:AT1G53240-MONOMER"/>
<dbReference type="BioCyc" id="MetaCyc:AT1G53240-MONOMER"/>
<dbReference type="BRENDA" id="1.1.1.37">
    <property type="organism ID" value="399"/>
</dbReference>
<dbReference type="CD-CODE" id="4299E36E">
    <property type="entry name" value="Nucleolus"/>
</dbReference>
<dbReference type="PRO" id="PR:Q9ZP06"/>
<dbReference type="Proteomes" id="UP000006548">
    <property type="component" value="Chromosome 1"/>
</dbReference>
<dbReference type="ExpressionAtlas" id="Q9ZP06">
    <property type="expression patterns" value="baseline and differential"/>
</dbReference>
<dbReference type="GO" id="GO:0009507">
    <property type="term" value="C:chloroplast"/>
    <property type="evidence" value="ECO:0007005"/>
    <property type="project" value="TAIR"/>
</dbReference>
<dbReference type="GO" id="GO:0005759">
    <property type="term" value="C:mitochondrial matrix"/>
    <property type="evidence" value="ECO:0007669"/>
    <property type="project" value="UniProtKB-SubCell"/>
</dbReference>
<dbReference type="GO" id="GO:0005739">
    <property type="term" value="C:mitochondrion"/>
    <property type="evidence" value="ECO:0000314"/>
    <property type="project" value="TAIR"/>
</dbReference>
<dbReference type="GO" id="GO:0005634">
    <property type="term" value="C:nucleus"/>
    <property type="evidence" value="ECO:0007005"/>
    <property type="project" value="TAIR"/>
</dbReference>
<dbReference type="GO" id="GO:0009505">
    <property type="term" value="C:plant-type cell wall"/>
    <property type="evidence" value="ECO:0007005"/>
    <property type="project" value="TAIR"/>
</dbReference>
<dbReference type="GO" id="GO:0005507">
    <property type="term" value="F:copper ion binding"/>
    <property type="evidence" value="ECO:0007005"/>
    <property type="project" value="TAIR"/>
</dbReference>
<dbReference type="GO" id="GO:0030060">
    <property type="term" value="F:L-malate dehydrogenase (NAD+) activity"/>
    <property type="evidence" value="ECO:0000315"/>
    <property type="project" value="TAIR"/>
</dbReference>
<dbReference type="GO" id="GO:0006108">
    <property type="term" value="P:malate metabolic process"/>
    <property type="evidence" value="ECO:0007669"/>
    <property type="project" value="InterPro"/>
</dbReference>
<dbReference type="GO" id="GO:0009409">
    <property type="term" value="P:response to cold"/>
    <property type="evidence" value="ECO:0000270"/>
    <property type="project" value="TAIR"/>
</dbReference>
<dbReference type="GO" id="GO:0006099">
    <property type="term" value="P:tricarboxylic acid cycle"/>
    <property type="evidence" value="ECO:0007669"/>
    <property type="project" value="UniProtKB-KW"/>
</dbReference>
<dbReference type="CDD" id="cd01337">
    <property type="entry name" value="MDH_glyoxysomal_mitochondrial"/>
    <property type="match status" value="1"/>
</dbReference>
<dbReference type="FunFam" id="3.40.50.720:FF:000013">
    <property type="entry name" value="Malate dehydrogenase"/>
    <property type="match status" value="1"/>
</dbReference>
<dbReference type="FunFam" id="3.90.110.10:FF:000001">
    <property type="entry name" value="Malate dehydrogenase"/>
    <property type="match status" value="1"/>
</dbReference>
<dbReference type="Gene3D" id="3.90.110.10">
    <property type="entry name" value="Lactate dehydrogenase/glycoside hydrolase, family 4, C-terminal"/>
    <property type="match status" value="1"/>
</dbReference>
<dbReference type="Gene3D" id="3.40.50.720">
    <property type="entry name" value="NAD(P)-binding Rossmann-like Domain"/>
    <property type="match status" value="1"/>
</dbReference>
<dbReference type="InterPro" id="IPR001557">
    <property type="entry name" value="L-lactate/malate_DH"/>
</dbReference>
<dbReference type="InterPro" id="IPR022383">
    <property type="entry name" value="Lactate/malate_DH_C"/>
</dbReference>
<dbReference type="InterPro" id="IPR001236">
    <property type="entry name" value="Lactate/malate_DH_N"/>
</dbReference>
<dbReference type="InterPro" id="IPR015955">
    <property type="entry name" value="Lactate_DH/Glyco_Ohase_4_C"/>
</dbReference>
<dbReference type="InterPro" id="IPR001252">
    <property type="entry name" value="Malate_DH_AS"/>
</dbReference>
<dbReference type="InterPro" id="IPR010097">
    <property type="entry name" value="Malate_DH_type1"/>
</dbReference>
<dbReference type="InterPro" id="IPR036291">
    <property type="entry name" value="NAD(P)-bd_dom_sf"/>
</dbReference>
<dbReference type="NCBIfam" id="TIGR01772">
    <property type="entry name" value="MDH_euk_gproteo"/>
    <property type="match status" value="1"/>
</dbReference>
<dbReference type="PANTHER" id="PTHR11540">
    <property type="entry name" value="MALATE AND LACTATE DEHYDROGENASE"/>
    <property type="match status" value="1"/>
</dbReference>
<dbReference type="PANTHER" id="PTHR11540:SF58">
    <property type="entry name" value="MALATE DEHYDROGENASE 1, MITOCHONDRIAL-RELATED"/>
    <property type="match status" value="1"/>
</dbReference>
<dbReference type="Pfam" id="PF02866">
    <property type="entry name" value="Ldh_1_C"/>
    <property type="match status" value="1"/>
</dbReference>
<dbReference type="Pfam" id="PF00056">
    <property type="entry name" value="Ldh_1_N"/>
    <property type="match status" value="1"/>
</dbReference>
<dbReference type="PIRSF" id="PIRSF000102">
    <property type="entry name" value="Lac_mal_DH"/>
    <property type="match status" value="1"/>
</dbReference>
<dbReference type="SUPFAM" id="SSF56327">
    <property type="entry name" value="LDH C-terminal domain-like"/>
    <property type="match status" value="1"/>
</dbReference>
<dbReference type="SUPFAM" id="SSF51735">
    <property type="entry name" value="NAD(P)-binding Rossmann-fold domains"/>
    <property type="match status" value="1"/>
</dbReference>
<dbReference type="PROSITE" id="PS00068">
    <property type="entry name" value="MDH"/>
    <property type="match status" value="1"/>
</dbReference>
<proteinExistence type="evidence at protein level"/>
<organism>
    <name type="scientific">Arabidopsis thaliana</name>
    <name type="common">Mouse-ear cress</name>
    <dbReference type="NCBI Taxonomy" id="3702"/>
    <lineage>
        <taxon>Eukaryota</taxon>
        <taxon>Viridiplantae</taxon>
        <taxon>Streptophyta</taxon>
        <taxon>Embryophyta</taxon>
        <taxon>Tracheophyta</taxon>
        <taxon>Spermatophyta</taxon>
        <taxon>Magnoliopsida</taxon>
        <taxon>eudicotyledons</taxon>
        <taxon>Gunneridae</taxon>
        <taxon>Pentapetalae</taxon>
        <taxon>rosids</taxon>
        <taxon>malvids</taxon>
        <taxon>Brassicales</taxon>
        <taxon>Brassicaceae</taxon>
        <taxon>Camelineae</taxon>
        <taxon>Arabidopsis</taxon>
    </lineage>
</organism>
<reference key="1">
    <citation type="journal article" date="1998" name="J. Biol. Chem.">
        <title>A novel, non-redox-regulated NAD-dependent malate dehydrogenase from chloroplasts of Arabidopsis thaliana L.</title>
        <authorList>
            <person name="Berkemeyer M."/>
            <person name="Scheibe R."/>
            <person name="Ocheretina O."/>
        </authorList>
    </citation>
    <scope>NUCLEOTIDE SEQUENCE [MRNA]</scope>
    <source>
        <strain>cv. Columbia</strain>
    </source>
</reference>
<reference key="2">
    <citation type="journal article" date="2000" name="Nature">
        <title>Sequence and analysis of chromosome 1 of the plant Arabidopsis thaliana.</title>
        <authorList>
            <person name="Theologis A."/>
            <person name="Ecker J.R."/>
            <person name="Palm C.J."/>
            <person name="Federspiel N.A."/>
            <person name="Kaul S."/>
            <person name="White O."/>
            <person name="Alonso J."/>
            <person name="Altafi H."/>
            <person name="Araujo R."/>
            <person name="Bowman C.L."/>
            <person name="Brooks S.Y."/>
            <person name="Buehler E."/>
            <person name="Chan A."/>
            <person name="Chao Q."/>
            <person name="Chen H."/>
            <person name="Cheuk R.F."/>
            <person name="Chin C.W."/>
            <person name="Chung M.K."/>
            <person name="Conn L."/>
            <person name="Conway A.B."/>
            <person name="Conway A.R."/>
            <person name="Creasy T.H."/>
            <person name="Dewar K."/>
            <person name="Dunn P."/>
            <person name="Etgu P."/>
            <person name="Feldblyum T.V."/>
            <person name="Feng J.-D."/>
            <person name="Fong B."/>
            <person name="Fujii C.Y."/>
            <person name="Gill J.E."/>
            <person name="Goldsmith A.D."/>
            <person name="Haas B."/>
            <person name="Hansen N.F."/>
            <person name="Hughes B."/>
            <person name="Huizar L."/>
            <person name="Hunter J.L."/>
            <person name="Jenkins J."/>
            <person name="Johnson-Hopson C."/>
            <person name="Khan S."/>
            <person name="Khaykin E."/>
            <person name="Kim C.J."/>
            <person name="Koo H.L."/>
            <person name="Kremenetskaia I."/>
            <person name="Kurtz D.B."/>
            <person name="Kwan A."/>
            <person name="Lam B."/>
            <person name="Langin-Hooper S."/>
            <person name="Lee A."/>
            <person name="Lee J.M."/>
            <person name="Lenz C.A."/>
            <person name="Li J.H."/>
            <person name="Li Y.-P."/>
            <person name="Lin X."/>
            <person name="Liu S.X."/>
            <person name="Liu Z.A."/>
            <person name="Luros J.S."/>
            <person name="Maiti R."/>
            <person name="Marziali A."/>
            <person name="Militscher J."/>
            <person name="Miranda M."/>
            <person name="Nguyen M."/>
            <person name="Nierman W.C."/>
            <person name="Osborne B.I."/>
            <person name="Pai G."/>
            <person name="Peterson J."/>
            <person name="Pham P.K."/>
            <person name="Rizzo M."/>
            <person name="Rooney T."/>
            <person name="Rowley D."/>
            <person name="Sakano H."/>
            <person name="Salzberg S.L."/>
            <person name="Schwartz J.R."/>
            <person name="Shinn P."/>
            <person name="Southwick A.M."/>
            <person name="Sun H."/>
            <person name="Tallon L.J."/>
            <person name="Tambunga G."/>
            <person name="Toriumi M.J."/>
            <person name="Town C.D."/>
            <person name="Utterback T."/>
            <person name="Van Aken S."/>
            <person name="Vaysberg M."/>
            <person name="Vysotskaia V.S."/>
            <person name="Walker M."/>
            <person name="Wu D."/>
            <person name="Yu G."/>
            <person name="Fraser C.M."/>
            <person name="Venter J.C."/>
            <person name="Davis R.W."/>
        </authorList>
    </citation>
    <scope>NUCLEOTIDE SEQUENCE [LARGE SCALE GENOMIC DNA]</scope>
    <source>
        <strain>cv. Columbia</strain>
    </source>
</reference>
<reference key="3">
    <citation type="journal article" date="2017" name="Plant J.">
        <title>Araport11: a complete reannotation of the Arabidopsis thaliana reference genome.</title>
        <authorList>
            <person name="Cheng C.Y."/>
            <person name="Krishnakumar V."/>
            <person name="Chan A.P."/>
            <person name="Thibaud-Nissen F."/>
            <person name="Schobel S."/>
            <person name="Town C.D."/>
        </authorList>
    </citation>
    <scope>GENOME REANNOTATION</scope>
    <source>
        <strain>cv. Columbia</strain>
    </source>
</reference>
<reference key="4">
    <citation type="journal article" date="2003" name="Science">
        <title>Empirical analysis of transcriptional activity in the Arabidopsis genome.</title>
        <authorList>
            <person name="Yamada K."/>
            <person name="Lim J."/>
            <person name="Dale J.M."/>
            <person name="Chen H."/>
            <person name="Shinn P."/>
            <person name="Palm C.J."/>
            <person name="Southwick A.M."/>
            <person name="Wu H.C."/>
            <person name="Kim C.J."/>
            <person name="Nguyen M."/>
            <person name="Pham P.K."/>
            <person name="Cheuk R.F."/>
            <person name="Karlin-Newmann G."/>
            <person name="Liu S.X."/>
            <person name="Lam B."/>
            <person name="Sakano H."/>
            <person name="Wu T."/>
            <person name="Yu G."/>
            <person name="Miranda M."/>
            <person name="Quach H.L."/>
            <person name="Tripp M."/>
            <person name="Chang C.H."/>
            <person name="Lee J.M."/>
            <person name="Toriumi M.J."/>
            <person name="Chan M.M."/>
            <person name="Tang C.C."/>
            <person name="Onodera C.S."/>
            <person name="Deng J.M."/>
            <person name="Akiyama K."/>
            <person name="Ansari Y."/>
            <person name="Arakawa T."/>
            <person name="Banh J."/>
            <person name="Banno F."/>
            <person name="Bowser L."/>
            <person name="Brooks S.Y."/>
            <person name="Carninci P."/>
            <person name="Chao Q."/>
            <person name="Choy N."/>
            <person name="Enju A."/>
            <person name="Goldsmith A.D."/>
            <person name="Gurjal M."/>
            <person name="Hansen N.F."/>
            <person name="Hayashizaki Y."/>
            <person name="Johnson-Hopson C."/>
            <person name="Hsuan V.W."/>
            <person name="Iida K."/>
            <person name="Karnes M."/>
            <person name="Khan S."/>
            <person name="Koesema E."/>
            <person name="Ishida J."/>
            <person name="Jiang P.X."/>
            <person name="Jones T."/>
            <person name="Kawai J."/>
            <person name="Kamiya A."/>
            <person name="Meyers C."/>
            <person name="Nakajima M."/>
            <person name="Narusaka M."/>
            <person name="Seki M."/>
            <person name="Sakurai T."/>
            <person name="Satou M."/>
            <person name="Tamse R."/>
            <person name="Vaysberg M."/>
            <person name="Wallender E.K."/>
            <person name="Wong C."/>
            <person name="Yamamura Y."/>
            <person name="Yuan S."/>
            <person name="Shinozaki K."/>
            <person name="Davis R.W."/>
            <person name="Theologis A."/>
            <person name="Ecker J.R."/>
        </authorList>
    </citation>
    <scope>NUCLEOTIDE SEQUENCE [LARGE SCALE MRNA]</scope>
    <source>
        <strain>cv. Columbia</strain>
    </source>
</reference>
<reference key="5">
    <citation type="submission" date="2002-03" db="EMBL/GenBank/DDBJ databases">
        <title>Full-length cDNA from Arabidopsis thaliana.</title>
        <authorList>
            <person name="Brover V.V."/>
            <person name="Troukhan M.E."/>
            <person name="Alexandrov N.A."/>
            <person name="Lu Y.-P."/>
            <person name="Flavell R.B."/>
            <person name="Feldmann K.A."/>
        </authorList>
    </citation>
    <scope>NUCLEOTIDE SEQUENCE [LARGE SCALE MRNA]</scope>
</reference>
<reference key="6">
    <citation type="journal article" date="2001" name="Plant Physiol.">
        <title>Proteomic approach to identify novel mitochondrial proteins in Arabidopsis.</title>
        <authorList>
            <person name="Kruft V."/>
            <person name="Eubel H."/>
            <person name="Jaensch L."/>
            <person name="Werhahn W."/>
            <person name="Braun H.-P."/>
        </authorList>
    </citation>
    <scope>PROTEIN SEQUENCE OF 23-37</scope>
    <scope>SUBCELLULAR LOCATION</scope>
    <source>
        <tissue>Leaf</tissue>
        <tissue>Stem</tissue>
    </source>
</reference>
<reference key="7">
    <citation type="journal article" date="2004" name="Plant Cell">
        <title>Experimental analysis of the Arabidopsis mitochondrial proteome highlights signaling and regulatory components, provides assessment of targeting prediction programs, and indicates plant-specific mitochondrial proteins.</title>
        <authorList>
            <person name="Heazlewood J.L."/>
            <person name="Tonti-Filippini J.S."/>
            <person name="Gout A.M."/>
            <person name="Day D.A."/>
            <person name="Whelan J."/>
            <person name="Millar A.H."/>
        </authorList>
    </citation>
    <scope>IDENTIFICATION BY MASS SPECTROMETRY</scope>
    <scope>SUBCELLULAR LOCATION [LARGE SCALE ANALYSIS]</scope>
    <source>
        <strain>cv. Landsberg erecta</strain>
    </source>
</reference>
<reference key="8">
    <citation type="journal article" date="2007" name="Mol. Cell. Proteomics">
        <title>Multidimensional protein identification technology (MudPIT) analysis of ubiquitinated proteins in plants.</title>
        <authorList>
            <person name="Maor R."/>
            <person name="Jones A."/>
            <person name="Nuehse T.S."/>
            <person name="Studholme D.J."/>
            <person name="Peck S.C."/>
            <person name="Shirasu K."/>
        </authorList>
    </citation>
    <scope>IDENTIFICATION BY MASS SPECTROMETRY [LARGE SCALE ANALYSIS]</scope>
    <source>
        <strain>cv. Landsberg erecta</strain>
    </source>
</reference>
<reference key="9">
    <citation type="journal article" date="2009" name="Plant Physiol.">
        <title>Large-scale Arabidopsis phosphoproteome profiling reveals novel chloroplast kinase substrates and phosphorylation networks.</title>
        <authorList>
            <person name="Reiland S."/>
            <person name="Messerli G."/>
            <person name="Baerenfaller K."/>
            <person name="Gerrits B."/>
            <person name="Endler A."/>
            <person name="Grossmann J."/>
            <person name="Gruissem W."/>
            <person name="Baginsky S."/>
        </authorList>
    </citation>
    <scope>IDENTIFICATION BY MASS SPECTROMETRY [LARGE SCALE ANALYSIS]</scope>
</reference>
<reference key="10">
    <citation type="journal article" date="2010" name="Plant Physiol.">
        <title>Mitochondrial malate dehydrogenase lowers leaf respiration and alters photorespiration and plant growth in Arabidopsis.</title>
        <authorList>
            <person name="Tomaz T."/>
            <person name="Bagard M."/>
            <person name="Pracharoenwattana I."/>
            <person name="Linden P."/>
            <person name="Lee C.P."/>
            <person name="Carroll A.J."/>
            <person name="Stroeher E."/>
            <person name="Smith S.M."/>
            <person name="Gardestroem P."/>
            <person name="Millar A.H."/>
        </authorList>
    </citation>
    <scope>IDENTIFICATION BY MASS SPECTROMETRY</scope>
    <scope>FUNCTION</scope>
    <scope>TISSUE SPECIFICITY</scope>
    <scope>DISRUPTION PHENOTYPE</scope>
</reference>
<reference key="11">
    <citation type="journal article" date="2015" name="J. Exp. Bot.">
        <title>Identification of cleavage sites and substrate proteins for two mitochondrial intermediate peptidases in Arabidopsis thaliana.</title>
        <authorList>
            <person name="Carrie C."/>
            <person name="Venne A.S."/>
            <person name="Zahedi R.P."/>
            <person name="Soll J."/>
        </authorList>
    </citation>
    <scope>IDENTIFICATION BY MASS SPECTROMETRY</scope>
    <scope>CLEAVAGE OF TRANSIT PEPTIDE AFTER PHE-22</scope>
</reference>
<reference key="12">
    <citation type="journal article" date="2015" name="Plant Cell Physiol.">
        <title>Plants possess a cyclic mitochondrial metabolic pathway similar to the mammalian metabolic repair mechanism involving malate dehydrogenase and l-2-hydroxyglutarate dehydrogenase.</title>
        <authorList>
            <person name="Huedig M."/>
            <person name="Maier A."/>
            <person name="Scherrers I."/>
            <person name="Seidel L."/>
            <person name="Jansen E.E."/>
            <person name="Mettler-Altmann T."/>
            <person name="Engqvist M.K."/>
            <person name="Maurino V.G."/>
        </authorList>
    </citation>
    <scope>FUNCTION</scope>
    <scope>CATALYTIC ACTIVITY</scope>
    <scope>BIOPHYSICOCHEMICAL PROPERTIES</scope>
</reference>
<reference key="13">
    <citation type="journal article" date="2016" name="Biochim. Biophys. Acta">
        <title>Adenine nucleotide-dependent and redox-independent control of mitochondrial malate dehydrogenase activity in Arabidopsis thaliana.</title>
        <authorList>
            <person name="Yoshida K."/>
            <person name="Hisabori T."/>
        </authorList>
    </citation>
    <scope>ACTIVITY REGULATION</scope>
    <scope>BIOPHYSICOCHEMICAL PROPERTIES</scope>
    <scope>DISULFIDE BOND</scope>
</reference>
<reference key="14">
    <citation type="journal article" date="2016" name="J. Exp. Bot.">
        <title>Reduced mitochondrial malate dehydrogenase activity has a strong effect on photorespiratory metabolism as revealed by 13C labelling.</title>
        <authorList>
            <person name="Linden P."/>
            <person name="Keech O."/>
            <person name="Stenlund H."/>
            <person name="Gardestroem P."/>
            <person name="Moritz T."/>
        </authorList>
    </citation>
    <scope>FUNCTION</scope>
    <scope>DISRUPTION PHENOTYPE</scope>
</reference>
<reference key="15">
    <citation type="journal article" date="2016" name="Plant Physiol.">
        <title>Loss of mitochondrial malate dehydrogenase activity alters seed metabolism impairing seed maturation and post-germination growth in Arabidopsis.</title>
        <authorList>
            <person name="Sew Y.S."/>
            <person name="Stroeher E."/>
            <person name="Fenske R."/>
            <person name="Millar A.H."/>
        </authorList>
    </citation>
    <scope>FUNCTION</scope>
    <scope>DISRUPTION PHENOTYPE</scope>
</reference>
<sequence length="341" mass="35804">MFRSMLVRSSASAKQAVIRRSFSSGSVPERKVAILGAAGGIGQPLALLMKLNPLVSSLSLYDIANTPGVAADVGHINTRSEVVGYMGDDNLAKALEGADLVIIPAGVPRKPGMTRDDLFNINAGIVKNLCTAIAKYCPHALINMISNPVNSTVPIAAEIFKKAGMYDEKKLFGVTTLDVVRARTFYAGKANVPVAEVNVPVIGGHAGVTILPLFSQATPQANLSSDILTALTKRTQDGGTEVVEAKAGKGSATLSMAYAGALFADACLKGLNGVPDVIECSYVQSTITELPFFASKVRLGKNGVEEVLDLGPLSDFEKEGLEALKPELKSSIEKGVKFANQ</sequence>